<name>YPR36_YEAST</name>
<reference key="1">
    <citation type="journal article" date="1997" name="Nature">
        <title>The nucleotide sequence of Saccharomyces cerevisiae chromosome XVI.</title>
        <authorList>
            <person name="Bussey H."/>
            <person name="Storms R.K."/>
            <person name="Ahmed A."/>
            <person name="Albermann K."/>
            <person name="Allen E."/>
            <person name="Ansorge W."/>
            <person name="Araujo R."/>
            <person name="Aparicio A."/>
            <person name="Barrell B.G."/>
            <person name="Badcock K."/>
            <person name="Benes V."/>
            <person name="Botstein D."/>
            <person name="Bowman S."/>
            <person name="Brueckner M."/>
            <person name="Carpenter J."/>
            <person name="Cherry J.M."/>
            <person name="Chung E."/>
            <person name="Churcher C.M."/>
            <person name="Coster F."/>
            <person name="Davis K."/>
            <person name="Davis R.W."/>
            <person name="Dietrich F.S."/>
            <person name="Delius H."/>
            <person name="DiPaolo T."/>
            <person name="Dubois E."/>
            <person name="Duesterhoeft A."/>
            <person name="Duncan M."/>
            <person name="Floeth M."/>
            <person name="Fortin N."/>
            <person name="Friesen J.D."/>
            <person name="Fritz C."/>
            <person name="Goffeau A."/>
            <person name="Hall J."/>
            <person name="Hebling U."/>
            <person name="Heumann K."/>
            <person name="Hilbert H."/>
            <person name="Hillier L.W."/>
            <person name="Hunicke-Smith S."/>
            <person name="Hyman R.W."/>
            <person name="Johnston M."/>
            <person name="Kalman S."/>
            <person name="Kleine K."/>
            <person name="Komp C."/>
            <person name="Kurdi O."/>
            <person name="Lashkari D."/>
            <person name="Lew H."/>
            <person name="Lin A."/>
            <person name="Lin D."/>
            <person name="Louis E.J."/>
            <person name="Marathe R."/>
            <person name="Messenguy F."/>
            <person name="Mewes H.-W."/>
            <person name="Mirtipati S."/>
            <person name="Moestl D."/>
            <person name="Mueller-Auer S."/>
            <person name="Namath A."/>
            <person name="Nentwich U."/>
            <person name="Oefner P."/>
            <person name="Pearson D."/>
            <person name="Petel F.X."/>
            <person name="Pohl T.M."/>
            <person name="Purnelle B."/>
            <person name="Rajandream M.A."/>
            <person name="Rechmann S."/>
            <person name="Rieger M."/>
            <person name="Riles L."/>
            <person name="Roberts D."/>
            <person name="Schaefer M."/>
            <person name="Scharfe M."/>
            <person name="Scherens B."/>
            <person name="Schramm S."/>
            <person name="Schroeder M."/>
            <person name="Sdicu A.-M."/>
            <person name="Tettelin H."/>
            <person name="Urrestarazu L.A."/>
            <person name="Ushinsky S."/>
            <person name="Vierendeels F."/>
            <person name="Vissers S."/>
            <person name="Voss H."/>
            <person name="Walsh S.V."/>
            <person name="Wambutt R."/>
            <person name="Wang Y."/>
            <person name="Wedler E."/>
            <person name="Wedler H."/>
            <person name="Winnett E."/>
            <person name="Zhong W.-W."/>
            <person name="Zollner A."/>
            <person name="Vo D.H."/>
            <person name="Hani J."/>
        </authorList>
    </citation>
    <scope>NUCLEOTIDE SEQUENCE [LARGE SCALE GENOMIC DNA]</scope>
    <source>
        <strain>ATCC 204508 / S288c</strain>
    </source>
</reference>
<reference key="2">
    <citation type="journal article" date="2014" name="G3 (Bethesda)">
        <title>The reference genome sequence of Saccharomyces cerevisiae: Then and now.</title>
        <authorList>
            <person name="Engel S.R."/>
            <person name="Dietrich F.S."/>
            <person name="Fisk D.G."/>
            <person name="Binkley G."/>
            <person name="Balakrishnan R."/>
            <person name="Costanzo M.C."/>
            <person name="Dwight S.S."/>
            <person name="Hitz B.C."/>
            <person name="Karra K."/>
            <person name="Nash R.S."/>
            <person name="Weng S."/>
            <person name="Wong E.D."/>
            <person name="Lloyd P."/>
            <person name="Skrzypek M.S."/>
            <person name="Miyasato S.R."/>
            <person name="Simison M."/>
            <person name="Cherry J.M."/>
        </authorList>
    </citation>
    <scope>GENOME REANNOTATION</scope>
    <source>
        <strain>ATCC 204508 / S288c</strain>
    </source>
</reference>
<organism>
    <name type="scientific">Saccharomyces cerevisiae (strain ATCC 204508 / S288c)</name>
    <name type="common">Baker's yeast</name>
    <dbReference type="NCBI Taxonomy" id="559292"/>
    <lineage>
        <taxon>Eukaryota</taxon>
        <taxon>Fungi</taxon>
        <taxon>Dikarya</taxon>
        <taxon>Ascomycota</taxon>
        <taxon>Saccharomycotina</taxon>
        <taxon>Saccharomycetes</taxon>
        <taxon>Saccharomycetales</taxon>
        <taxon>Saccharomycetaceae</taxon>
        <taxon>Saccharomyces</taxon>
    </lineage>
</organism>
<evidence type="ECO:0000305" key="1">
    <source>
    </source>
</evidence>
<sequence length="170" mass="18443">MQVRLFSPTLVKLCFASDIRSLSPKYLKTRPCCSATSSFNLDAMISLSKSPASKLLYSSIVLSLRLFKSFSSAFLLSVKMSLASLFRFSRYCFASLLLLSAGFSPSNSSSDSNASSSSETSSCSSSFEDGSVISSSTVGFDGLTSPLDLFLFFCWVTSDIFSRFSIILKC</sequence>
<protein>
    <recommendedName>
        <fullName>Putative uncharacterized protein YPR136C</fullName>
    </recommendedName>
</protein>
<comment type="caution">
    <text evidence="1">Product of a dubious gene prediction unlikely to encode a functional protein. Because of that it is not part of the S.cerevisiae S288c complete/reference proteome set.</text>
</comment>
<gene>
    <name type="ordered locus">YPR136C</name>
    <name type="ORF">P9659.7B</name>
</gene>
<proteinExistence type="uncertain"/>
<accession>O13569</accession>
<dbReference type="EMBL" id="U40829">
    <property type="protein sequence ID" value="AAB68292.1"/>
    <property type="molecule type" value="Genomic_DNA"/>
</dbReference>
<dbReference type="PIR" id="S69465">
    <property type="entry name" value="S69465"/>
</dbReference>
<dbReference type="DIP" id="DIP-5196N"/>
<dbReference type="IntAct" id="O13569">
    <property type="interactions" value="1"/>
</dbReference>
<dbReference type="STRING" id="4932.YPR136C"/>
<dbReference type="PaxDb" id="4932-YPR136C"/>
<dbReference type="EnsemblFungi" id="YPR136C_mRNA">
    <property type="protein sequence ID" value="YPR136C"/>
    <property type="gene ID" value="YPR136C"/>
</dbReference>
<dbReference type="AGR" id="SGD:S000006340"/>
<dbReference type="SGD" id="S000006340">
    <property type="gene designation" value="YPR136C"/>
</dbReference>
<dbReference type="HOGENOM" id="CLU_1571837_0_0_1"/>
<feature type="chain" id="PRO_0000299828" description="Putative uncharacterized protein YPR136C">
    <location>
        <begin position="1"/>
        <end position="170"/>
    </location>
</feature>